<evidence type="ECO:0000255" key="1">
    <source>
        <dbReference type="HAMAP-Rule" id="MF_00335"/>
    </source>
</evidence>
<evidence type="ECO:0000255" key="2">
    <source>
        <dbReference type="PROSITE-ProRule" id="PRU01175"/>
    </source>
</evidence>
<gene>
    <name evidence="1" type="primary">rny</name>
    <name type="ordered locus">CHY_1168</name>
</gene>
<reference key="1">
    <citation type="journal article" date="2005" name="PLoS Genet.">
        <title>Life in hot carbon monoxide: the complete genome sequence of Carboxydothermus hydrogenoformans Z-2901.</title>
        <authorList>
            <person name="Wu M."/>
            <person name="Ren Q."/>
            <person name="Durkin A.S."/>
            <person name="Daugherty S.C."/>
            <person name="Brinkac L.M."/>
            <person name="Dodson R.J."/>
            <person name="Madupu R."/>
            <person name="Sullivan S.A."/>
            <person name="Kolonay J.F."/>
            <person name="Nelson W.C."/>
            <person name="Tallon L.J."/>
            <person name="Jones K.M."/>
            <person name="Ulrich L.E."/>
            <person name="Gonzalez J.M."/>
            <person name="Zhulin I.B."/>
            <person name="Robb F.T."/>
            <person name="Eisen J.A."/>
        </authorList>
    </citation>
    <scope>NUCLEOTIDE SEQUENCE [LARGE SCALE GENOMIC DNA]</scope>
    <source>
        <strain>ATCC BAA-161 / DSM 6008 / Z-2901</strain>
    </source>
</reference>
<dbReference type="EC" id="3.1.-.-" evidence="1"/>
<dbReference type="EMBL" id="CP000141">
    <property type="protein sequence ID" value="ABB13886.1"/>
    <property type="molecule type" value="Genomic_DNA"/>
</dbReference>
<dbReference type="RefSeq" id="WP_011344089.1">
    <property type="nucleotide sequence ID" value="NC_007503.1"/>
</dbReference>
<dbReference type="SMR" id="Q3ACX1"/>
<dbReference type="FunCoup" id="Q3ACX1">
    <property type="interactions" value="106"/>
</dbReference>
<dbReference type="STRING" id="246194.CHY_1168"/>
<dbReference type="KEGG" id="chy:CHY_1168"/>
<dbReference type="eggNOG" id="COG1418">
    <property type="taxonomic scope" value="Bacteria"/>
</dbReference>
<dbReference type="HOGENOM" id="CLU_028328_1_0_9"/>
<dbReference type="InParanoid" id="Q3ACX1"/>
<dbReference type="OrthoDB" id="9803205at2"/>
<dbReference type="Proteomes" id="UP000002706">
    <property type="component" value="Chromosome"/>
</dbReference>
<dbReference type="GO" id="GO:0005886">
    <property type="term" value="C:plasma membrane"/>
    <property type="evidence" value="ECO:0007669"/>
    <property type="project" value="UniProtKB-SubCell"/>
</dbReference>
<dbReference type="GO" id="GO:0003723">
    <property type="term" value="F:RNA binding"/>
    <property type="evidence" value="ECO:0007669"/>
    <property type="project" value="UniProtKB-UniRule"/>
</dbReference>
<dbReference type="GO" id="GO:0004521">
    <property type="term" value="F:RNA endonuclease activity"/>
    <property type="evidence" value="ECO:0007669"/>
    <property type="project" value="UniProtKB-UniRule"/>
</dbReference>
<dbReference type="GO" id="GO:0006402">
    <property type="term" value="P:mRNA catabolic process"/>
    <property type="evidence" value="ECO:0007669"/>
    <property type="project" value="UniProtKB-UniRule"/>
</dbReference>
<dbReference type="CDD" id="cd00077">
    <property type="entry name" value="HDc"/>
    <property type="match status" value="1"/>
</dbReference>
<dbReference type="CDD" id="cd22431">
    <property type="entry name" value="KH-I_RNaseY"/>
    <property type="match status" value="1"/>
</dbReference>
<dbReference type="FunFam" id="1.10.3210.10:FF:000003">
    <property type="entry name" value="Ribonuclease Y"/>
    <property type="match status" value="1"/>
</dbReference>
<dbReference type="FunFam" id="3.30.1370.10:FF:000006">
    <property type="entry name" value="Ribonuclease Y"/>
    <property type="match status" value="1"/>
</dbReference>
<dbReference type="Gene3D" id="1.10.3210.10">
    <property type="entry name" value="Hypothetical protein af1432"/>
    <property type="match status" value="1"/>
</dbReference>
<dbReference type="Gene3D" id="3.30.1370.10">
    <property type="entry name" value="K Homology domain, type 1"/>
    <property type="match status" value="1"/>
</dbReference>
<dbReference type="HAMAP" id="MF_00335">
    <property type="entry name" value="RNase_Y"/>
    <property type="match status" value="1"/>
</dbReference>
<dbReference type="InterPro" id="IPR003607">
    <property type="entry name" value="HD/PDEase_dom"/>
</dbReference>
<dbReference type="InterPro" id="IPR006674">
    <property type="entry name" value="HD_domain"/>
</dbReference>
<dbReference type="InterPro" id="IPR006675">
    <property type="entry name" value="HDIG_dom"/>
</dbReference>
<dbReference type="InterPro" id="IPR004087">
    <property type="entry name" value="KH_dom"/>
</dbReference>
<dbReference type="InterPro" id="IPR004088">
    <property type="entry name" value="KH_dom_type_1"/>
</dbReference>
<dbReference type="InterPro" id="IPR036612">
    <property type="entry name" value="KH_dom_type_1_sf"/>
</dbReference>
<dbReference type="InterPro" id="IPR017705">
    <property type="entry name" value="Ribonuclease_Y"/>
</dbReference>
<dbReference type="InterPro" id="IPR022711">
    <property type="entry name" value="RNase_Y_N"/>
</dbReference>
<dbReference type="NCBIfam" id="TIGR00277">
    <property type="entry name" value="HDIG"/>
    <property type="match status" value="1"/>
</dbReference>
<dbReference type="NCBIfam" id="TIGR03319">
    <property type="entry name" value="RNase_Y"/>
    <property type="match status" value="1"/>
</dbReference>
<dbReference type="PANTHER" id="PTHR12826">
    <property type="entry name" value="RIBONUCLEASE Y"/>
    <property type="match status" value="1"/>
</dbReference>
<dbReference type="PANTHER" id="PTHR12826:SF15">
    <property type="entry name" value="RIBONUCLEASE Y"/>
    <property type="match status" value="1"/>
</dbReference>
<dbReference type="Pfam" id="PF01966">
    <property type="entry name" value="HD"/>
    <property type="match status" value="1"/>
</dbReference>
<dbReference type="Pfam" id="PF00013">
    <property type="entry name" value="KH_1"/>
    <property type="match status" value="1"/>
</dbReference>
<dbReference type="Pfam" id="PF12072">
    <property type="entry name" value="RNase_Y_N"/>
    <property type="match status" value="1"/>
</dbReference>
<dbReference type="SMART" id="SM00471">
    <property type="entry name" value="HDc"/>
    <property type="match status" value="1"/>
</dbReference>
<dbReference type="SMART" id="SM00322">
    <property type="entry name" value="KH"/>
    <property type="match status" value="1"/>
</dbReference>
<dbReference type="SUPFAM" id="SSF54791">
    <property type="entry name" value="Eukaryotic type KH-domain (KH-domain type I)"/>
    <property type="match status" value="1"/>
</dbReference>
<dbReference type="SUPFAM" id="SSF109604">
    <property type="entry name" value="HD-domain/PDEase-like"/>
    <property type="match status" value="1"/>
</dbReference>
<dbReference type="PROSITE" id="PS51831">
    <property type="entry name" value="HD"/>
    <property type="match status" value="1"/>
</dbReference>
<dbReference type="PROSITE" id="PS50084">
    <property type="entry name" value="KH_TYPE_1"/>
    <property type="match status" value="1"/>
</dbReference>
<proteinExistence type="inferred from homology"/>
<keyword id="KW-1003">Cell membrane</keyword>
<keyword id="KW-0255">Endonuclease</keyword>
<keyword id="KW-0378">Hydrolase</keyword>
<keyword id="KW-0472">Membrane</keyword>
<keyword id="KW-0540">Nuclease</keyword>
<keyword id="KW-1185">Reference proteome</keyword>
<keyword id="KW-0694">RNA-binding</keyword>
<keyword id="KW-0812">Transmembrane</keyword>
<keyword id="KW-1133">Transmembrane helix</keyword>
<protein>
    <recommendedName>
        <fullName evidence="1">Ribonuclease Y</fullName>
        <shortName evidence="1">RNase Y</shortName>
        <ecNumber evidence="1">3.1.-.-</ecNumber>
    </recommendedName>
</protein>
<name>RNY_CARHZ</name>
<comment type="function">
    <text evidence="1">Endoribonuclease that initiates mRNA decay.</text>
</comment>
<comment type="subcellular location">
    <subcellularLocation>
        <location evidence="1">Cell membrane</location>
        <topology evidence="1">Single-pass membrane protein</topology>
    </subcellularLocation>
</comment>
<comment type="similarity">
    <text evidence="1">Belongs to the RNase Y family.</text>
</comment>
<feature type="chain" id="PRO_0000344840" description="Ribonuclease Y">
    <location>
        <begin position="1"/>
        <end position="513"/>
    </location>
</feature>
<feature type="transmembrane region" description="Helical" evidence="1">
    <location>
        <begin position="4"/>
        <end position="24"/>
    </location>
</feature>
<feature type="domain" description="KH" evidence="1">
    <location>
        <begin position="203"/>
        <end position="266"/>
    </location>
</feature>
<feature type="domain" description="HD" evidence="2">
    <location>
        <begin position="329"/>
        <end position="422"/>
    </location>
</feature>
<organism>
    <name type="scientific">Carboxydothermus hydrogenoformans (strain ATCC BAA-161 / DSM 6008 / Z-2901)</name>
    <dbReference type="NCBI Taxonomy" id="246194"/>
    <lineage>
        <taxon>Bacteria</taxon>
        <taxon>Bacillati</taxon>
        <taxon>Bacillota</taxon>
        <taxon>Clostridia</taxon>
        <taxon>Thermoanaerobacterales</taxon>
        <taxon>Thermoanaerobacteraceae</taxon>
        <taxon>Carboxydothermus</taxon>
    </lineage>
</organism>
<sequence length="513" mass="57583">MNLITDIIIAVAGVGVGVAAGYVIRKNIAEAAIGSAEAQAKKIIDEATKAAEAKKREAVLEAKEEILKMKNEVEREHRERRQELQRLERRLLSKEETLDRKIESFERKEEQLAKKEQEIENLRQSLEETLQKELAELERISGLSTEEARELLLKQVEEEVQQEMALLIKEIETKAKEEAEKRAREIITLAIQRCAADHAAETTVTVVALPNDEMKGRIIGREGRNIRTFESLTGVDLIIDDTPEAVILSGFDPIRREIARRALEKLIQDGRIHPARIEEMVERATKEVEQDIREAGEQAAFEVNVHGLHPEIIKLLGRLKFRTSYGQNILKHSIEVAHLAGLMAAELGADVALAKRAGLLHDIGKAVDHEVEGSHVEIGVELAKKYREHPEVLHAIATHHGDEEPKTVEAVLVQAADAISAARPGARRETLEAYLKRLEKLEGIANEFEGVEKSYAIQAGRELRILVKPEKIDDLASVRLAREIAKKIEEEVEYPGQIKVTVIRETRAVDYAK</sequence>
<accession>Q3ACX1</accession>